<feature type="chain" id="PRO_1000024584" description="ATP-dependent Clp protease ATP-binding subunit ClpX">
    <location>
        <begin position="1"/>
        <end position="421"/>
    </location>
</feature>
<feature type="domain" description="ClpX-type ZB" evidence="2">
    <location>
        <begin position="1"/>
        <end position="54"/>
    </location>
</feature>
<feature type="binding site" evidence="2">
    <location>
        <position position="13"/>
    </location>
    <ligand>
        <name>Zn(2+)</name>
        <dbReference type="ChEBI" id="CHEBI:29105"/>
    </ligand>
</feature>
<feature type="binding site" evidence="2">
    <location>
        <position position="16"/>
    </location>
    <ligand>
        <name>Zn(2+)</name>
        <dbReference type="ChEBI" id="CHEBI:29105"/>
    </ligand>
</feature>
<feature type="binding site" evidence="2">
    <location>
        <position position="35"/>
    </location>
    <ligand>
        <name>Zn(2+)</name>
        <dbReference type="ChEBI" id="CHEBI:29105"/>
    </ligand>
</feature>
<feature type="binding site" evidence="2">
    <location>
        <position position="38"/>
    </location>
    <ligand>
        <name>Zn(2+)</name>
        <dbReference type="ChEBI" id="CHEBI:29105"/>
    </ligand>
</feature>
<feature type="binding site" evidence="1">
    <location>
        <begin position="119"/>
        <end position="126"/>
    </location>
    <ligand>
        <name>ATP</name>
        <dbReference type="ChEBI" id="CHEBI:30616"/>
    </ligand>
</feature>
<gene>
    <name evidence="1" type="primary">clpX</name>
    <name type="ordered locus">Mfla_1410</name>
</gene>
<evidence type="ECO:0000255" key="1">
    <source>
        <dbReference type="HAMAP-Rule" id="MF_00175"/>
    </source>
</evidence>
<evidence type="ECO:0000255" key="2">
    <source>
        <dbReference type="PROSITE-ProRule" id="PRU01250"/>
    </source>
</evidence>
<proteinExistence type="inferred from homology"/>
<comment type="function">
    <text evidence="1">ATP-dependent specificity component of the Clp protease. It directs the protease to specific substrates. Can perform chaperone functions in the absence of ClpP.</text>
</comment>
<comment type="subunit">
    <text evidence="1">Component of the ClpX-ClpP complex. Forms a hexameric ring that, in the presence of ATP, binds to fourteen ClpP subunits assembled into a disk-like structure with a central cavity, resembling the structure of eukaryotic proteasomes.</text>
</comment>
<comment type="similarity">
    <text evidence="1">Belongs to the ClpX chaperone family.</text>
</comment>
<name>CLPX_METFK</name>
<keyword id="KW-0067">ATP-binding</keyword>
<keyword id="KW-0143">Chaperone</keyword>
<keyword id="KW-0479">Metal-binding</keyword>
<keyword id="KW-0547">Nucleotide-binding</keyword>
<keyword id="KW-1185">Reference proteome</keyword>
<keyword id="KW-0862">Zinc</keyword>
<accession>Q1H1F9</accession>
<sequence>MTTKAEGEKLLYCSFCGKSQHEVRKLIAGPSVFICDECVDLCNDIIREEVQEADGLKPKSGKLPTPKEICAILDQYVIGQTQAKKNLAVAVYNHYKRLEQGGQKDDVEIAKSNILVIGPTGSGKTLLAQTLARLLDVPFVMADATTLTEAGYVGEDVENIMQKLLQKCDYDVEKAQRGIVYIDEIDKISRKSDNPSITRDVSGEGVQQALLKLIEGTVASVPPQGGRKHPNQEFVQLDTTNILFICGGAFDGLEKIIRRRSEKGGIGFGAEVKSKEDARAIGEVLRDVEPEDLIKFGLIPEFVGRLPAIATLESLDEDALVTILVEPKNALTKQYIKLFKMEGVDLEFREAALRMIAKKALERKTGARGLRSIMEHALLEIMYDLPSIPNLRKVVVDEGVIKGDSPPILIYADEPRLETAS</sequence>
<dbReference type="EMBL" id="CP000284">
    <property type="protein sequence ID" value="ABE49678.1"/>
    <property type="molecule type" value="Genomic_DNA"/>
</dbReference>
<dbReference type="RefSeq" id="WP_011479632.1">
    <property type="nucleotide sequence ID" value="NC_007947.1"/>
</dbReference>
<dbReference type="SMR" id="Q1H1F9"/>
<dbReference type="STRING" id="265072.Mfla_1410"/>
<dbReference type="KEGG" id="mfa:Mfla_1410"/>
<dbReference type="eggNOG" id="COG1219">
    <property type="taxonomic scope" value="Bacteria"/>
</dbReference>
<dbReference type="HOGENOM" id="CLU_014218_8_2_4"/>
<dbReference type="OrthoDB" id="9804062at2"/>
<dbReference type="Proteomes" id="UP000002440">
    <property type="component" value="Chromosome"/>
</dbReference>
<dbReference type="GO" id="GO:0009376">
    <property type="term" value="C:HslUV protease complex"/>
    <property type="evidence" value="ECO:0007669"/>
    <property type="project" value="TreeGrafter"/>
</dbReference>
<dbReference type="GO" id="GO:0005524">
    <property type="term" value="F:ATP binding"/>
    <property type="evidence" value="ECO:0007669"/>
    <property type="project" value="UniProtKB-UniRule"/>
</dbReference>
<dbReference type="GO" id="GO:0016887">
    <property type="term" value="F:ATP hydrolysis activity"/>
    <property type="evidence" value="ECO:0007669"/>
    <property type="project" value="InterPro"/>
</dbReference>
<dbReference type="GO" id="GO:0140662">
    <property type="term" value="F:ATP-dependent protein folding chaperone"/>
    <property type="evidence" value="ECO:0007669"/>
    <property type="project" value="InterPro"/>
</dbReference>
<dbReference type="GO" id="GO:0046983">
    <property type="term" value="F:protein dimerization activity"/>
    <property type="evidence" value="ECO:0007669"/>
    <property type="project" value="InterPro"/>
</dbReference>
<dbReference type="GO" id="GO:0051082">
    <property type="term" value="F:unfolded protein binding"/>
    <property type="evidence" value="ECO:0007669"/>
    <property type="project" value="UniProtKB-UniRule"/>
</dbReference>
<dbReference type="GO" id="GO:0008270">
    <property type="term" value="F:zinc ion binding"/>
    <property type="evidence" value="ECO:0007669"/>
    <property type="project" value="InterPro"/>
</dbReference>
<dbReference type="GO" id="GO:0051301">
    <property type="term" value="P:cell division"/>
    <property type="evidence" value="ECO:0007669"/>
    <property type="project" value="TreeGrafter"/>
</dbReference>
<dbReference type="GO" id="GO:0051603">
    <property type="term" value="P:proteolysis involved in protein catabolic process"/>
    <property type="evidence" value="ECO:0007669"/>
    <property type="project" value="TreeGrafter"/>
</dbReference>
<dbReference type="CDD" id="cd19497">
    <property type="entry name" value="RecA-like_ClpX"/>
    <property type="match status" value="1"/>
</dbReference>
<dbReference type="FunFam" id="1.10.8.60:FF:000002">
    <property type="entry name" value="ATP-dependent Clp protease ATP-binding subunit ClpX"/>
    <property type="match status" value="1"/>
</dbReference>
<dbReference type="FunFam" id="3.40.50.300:FF:000005">
    <property type="entry name" value="ATP-dependent Clp protease ATP-binding subunit ClpX"/>
    <property type="match status" value="1"/>
</dbReference>
<dbReference type="Gene3D" id="1.10.8.60">
    <property type="match status" value="1"/>
</dbReference>
<dbReference type="Gene3D" id="6.20.220.10">
    <property type="entry name" value="ClpX chaperone, C4-type zinc finger domain"/>
    <property type="match status" value="1"/>
</dbReference>
<dbReference type="Gene3D" id="3.40.50.300">
    <property type="entry name" value="P-loop containing nucleotide triphosphate hydrolases"/>
    <property type="match status" value="1"/>
</dbReference>
<dbReference type="HAMAP" id="MF_00175">
    <property type="entry name" value="ClpX"/>
    <property type="match status" value="1"/>
</dbReference>
<dbReference type="InterPro" id="IPR003593">
    <property type="entry name" value="AAA+_ATPase"/>
</dbReference>
<dbReference type="InterPro" id="IPR050052">
    <property type="entry name" value="ATP-dep_Clp_protease_ClpX"/>
</dbReference>
<dbReference type="InterPro" id="IPR003959">
    <property type="entry name" value="ATPase_AAA_core"/>
</dbReference>
<dbReference type="InterPro" id="IPR019489">
    <property type="entry name" value="Clp_ATPase_C"/>
</dbReference>
<dbReference type="InterPro" id="IPR004487">
    <property type="entry name" value="Clp_protease_ATP-bd_su_ClpX"/>
</dbReference>
<dbReference type="InterPro" id="IPR046425">
    <property type="entry name" value="ClpX_bact"/>
</dbReference>
<dbReference type="InterPro" id="IPR027417">
    <property type="entry name" value="P-loop_NTPase"/>
</dbReference>
<dbReference type="InterPro" id="IPR010603">
    <property type="entry name" value="Znf_CppX_C4"/>
</dbReference>
<dbReference type="InterPro" id="IPR038366">
    <property type="entry name" value="Znf_CppX_C4_sf"/>
</dbReference>
<dbReference type="NCBIfam" id="TIGR00382">
    <property type="entry name" value="clpX"/>
    <property type="match status" value="1"/>
</dbReference>
<dbReference type="NCBIfam" id="NF003745">
    <property type="entry name" value="PRK05342.1"/>
    <property type="match status" value="1"/>
</dbReference>
<dbReference type="PANTHER" id="PTHR48102:SF7">
    <property type="entry name" value="ATP-DEPENDENT CLP PROTEASE ATP-BINDING SUBUNIT CLPX-LIKE, MITOCHONDRIAL"/>
    <property type="match status" value="1"/>
</dbReference>
<dbReference type="PANTHER" id="PTHR48102">
    <property type="entry name" value="ATP-DEPENDENT CLP PROTEASE ATP-BINDING SUBUNIT CLPX-LIKE, MITOCHONDRIAL-RELATED"/>
    <property type="match status" value="1"/>
</dbReference>
<dbReference type="Pfam" id="PF07724">
    <property type="entry name" value="AAA_2"/>
    <property type="match status" value="1"/>
</dbReference>
<dbReference type="Pfam" id="PF10431">
    <property type="entry name" value="ClpB_D2-small"/>
    <property type="match status" value="1"/>
</dbReference>
<dbReference type="Pfam" id="PF06689">
    <property type="entry name" value="zf-C4_ClpX"/>
    <property type="match status" value="1"/>
</dbReference>
<dbReference type="SMART" id="SM00382">
    <property type="entry name" value="AAA"/>
    <property type="match status" value="1"/>
</dbReference>
<dbReference type="SMART" id="SM01086">
    <property type="entry name" value="ClpB_D2-small"/>
    <property type="match status" value="1"/>
</dbReference>
<dbReference type="SMART" id="SM00994">
    <property type="entry name" value="zf-C4_ClpX"/>
    <property type="match status" value="1"/>
</dbReference>
<dbReference type="SUPFAM" id="SSF57716">
    <property type="entry name" value="Glucocorticoid receptor-like (DNA-binding domain)"/>
    <property type="match status" value="1"/>
</dbReference>
<dbReference type="SUPFAM" id="SSF52540">
    <property type="entry name" value="P-loop containing nucleoside triphosphate hydrolases"/>
    <property type="match status" value="1"/>
</dbReference>
<dbReference type="PROSITE" id="PS51902">
    <property type="entry name" value="CLPX_ZB"/>
    <property type="match status" value="1"/>
</dbReference>
<reference key="1">
    <citation type="submission" date="2006-03" db="EMBL/GenBank/DDBJ databases">
        <title>Complete sequence of Methylobacillus flagellatus KT.</title>
        <authorList>
            <consortium name="US DOE Joint Genome Institute"/>
            <person name="Copeland A."/>
            <person name="Lucas S."/>
            <person name="Lapidus A."/>
            <person name="Barry K."/>
            <person name="Detter J.C."/>
            <person name="Glavina del Rio T."/>
            <person name="Hammon N."/>
            <person name="Israni S."/>
            <person name="Dalin E."/>
            <person name="Tice H."/>
            <person name="Pitluck S."/>
            <person name="Brettin T."/>
            <person name="Bruce D."/>
            <person name="Han C."/>
            <person name="Tapia R."/>
            <person name="Saunders E."/>
            <person name="Gilna P."/>
            <person name="Schmutz J."/>
            <person name="Larimer F."/>
            <person name="Land M."/>
            <person name="Kyrpides N."/>
            <person name="Anderson I."/>
            <person name="Richardson P."/>
        </authorList>
    </citation>
    <scope>NUCLEOTIDE SEQUENCE [LARGE SCALE GENOMIC DNA]</scope>
    <source>
        <strain>ATCC 51484 / DSM 6875 / VKM B-1610 / KT</strain>
    </source>
</reference>
<organism>
    <name type="scientific">Methylobacillus flagellatus (strain ATCC 51484 / DSM 6875 / VKM B-1610 / KT)</name>
    <dbReference type="NCBI Taxonomy" id="265072"/>
    <lineage>
        <taxon>Bacteria</taxon>
        <taxon>Pseudomonadati</taxon>
        <taxon>Pseudomonadota</taxon>
        <taxon>Betaproteobacteria</taxon>
        <taxon>Nitrosomonadales</taxon>
        <taxon>Methylophilaceae</taxon>
        <taxon>Methylobacillus</taxon>
    </lineage>
</organism>
<protein>
    <recommendedName>
        <fullName evidence="1">ATP-dependent Clp protease ATP-binding subunit ClpX</fullName>
    </recommendedName>
</protein>